<reference key="1">
    <citation type="journal article" date="1997" name="J. Biol. Chem.">
        <title>ArgBP2, a multiple Src homology 3 domain-containing, Arg/Abl-interacting protein, is phosphorylated in v-Abl-transformed cells and localized in stress fibers and cardiocyte Z-disks.</title>
        <authorList>
            <person name="Wang B."/>
            <person name="Golemis E.A."/>
            <person name="Kruh G.D."/>
        </authorList>
    </citation>
    <scope>NUCLEOTIDE SEQUENCE [MRNA] (ISOFORMS 2 AND 5)</scope>
    <scope>NUCLEOTIDE SEQUENCE [MRNA] OF 1-1049 (ISOFORM 4)</scope>
    <scope>PHOSPHORYLATION</scope>
    <scope>TISSUE SPECIFICITY</scope>
    <scope>SUBCELLULAR LOCATION</scope>
    <scope>INTERACTION WITH ABL1 AND ABL2</scope>
    <scope>FUNCTION</scope>
    <source>
        <tissue>Brain</tissue>
    </source>
</reference>
<reference key="2">
    <citation type="journal article" date="2001" name="Peptides">
        <title>Coding region of the sorbin gene in different species.</title>
        <authorList>
            <person name="Wahbi K."/>
            <person name="Magaud J.-P."/>
            <person name="Pansu D."/>
            <person name="Descroix-Vagne M."/>
        </authorList>
    </citation>
    <scope>NUCLEOTIDE SEQUENCE [MRNA] (ISOFORM 6)</scope>
    <scope>AMIDATION AT ALA-153 (ISOFORM 6)</scope>
    <scope>TISSUE SPECIFICITY</scope>
</reference>
<reference key="3">
    <citation type="journal article" date="1998" name="DNA Res.">
        <title>Prediction of the coding sequences of unidentified human genes. XI. The complete sequences of 100 new cDNA clones from brain which code for large proteins in vitro.</title>
        <authorList>
            <person name="Nagase T."/>
            <person name="Ishikawa K."/>
            <person name="Suyama M."/>
            <person name="Kikuno R."/>
            <person name="Miyajima N."/>
            <person name="Tanaka A."/>
            <person name="Kotani H."/>
            <person name="Nomura N."/>
            <person name="Ohara O."/>
        </authorList>
    </citation>
    <scope>NUCLEOTIDE SEQUENCE [LARGE SCALE MRNA] (ISOFORM 1)</scope>
    <source>
        <tissue>Brain</tissue>
    </source>
</reference>
<reference key="4">
    <citation type="journal article" date="2004" name="Nat. Genet.">
        <title>Complete sequencing and characterization of 21,243 full-length human cDNAs.</title>
        <authorList>
            <person name="Ota T."/>
            <person name="Suzuki Y."/>
            <person name="Nishikawa T."/>
            <person name="Otsuki T."/>
            <person name="Sugiyama T."/>
            <person name="Irie R."/>
            <person name="Wakamatsu A."/>
            <person name="Hayashi K."/>
            <person name="Sato H."/>
            <person name="Nagai K."/>
            <person name="Kimura K."/>
            <person name="Makita H."/>
            <person name="Sekine M."/>
            <person name="Obayashi M."/>
            <person name="Nishi T."/>
            <person name="Shibahara T."/>
            <person name="Tanaka T."/>
            <person name="Ishii S."/>
            <person name="Yamamoto J."/>
            <person name="Saito K."/>
            <person name="Kawai Y."/>
            <person name="Isono Y."/>
            <person name="Nakamura Y."/>
            <person name="Nagahari K."/>
            <person name="Murakami K."/>
            <person name="Yasuda T."/>
            <person name="Iwayanagi T."/>
            <person name="Wagatsuma M."/>
            <person name="Shiratori A."/>
            <person name="Sudo H."/>
            <person name="Hosoiri T."/>
            <person name="Kaku Y."/>
            <person name="Kodaira H."/>
            <person name="Kondo H."/>
            <person name="Sugawara M."/>
            <person name="Takahashi M."/>
            <person name="Kanda K."/>
            <person name="Yokoi T."/>
            <person name="Furuya T."/>
            <person name="Kikkawa E."/>
            <person name="Omura Y."/>
            <person name="Abe K."/>
            <person name="Kamihara K."/>
            <person name="Katsuta N."/>
            <person name="Sato K."/>
            <person name="Tanikawa M."/>
            <person name="Yamazaki M."/>
            <person name="Ninomiya K."/>
            <person name="Ishibashi T."/>
            <person name="Yamashita H."/>
            <person name="Murakawa K."/>
            <person name="Fujimori K."/>
            <person name="Tanai H."/>
            <person name="Kimata M."/>
            <person name="Watanabe M."/>
            <person name="Hiraoka S."/>
            <person name="Chiba Y."/>
            <person name="Ishida S."/>
            <person name="Ono Y."/>
            <person name="Takiguchi S."/>
            <person name="Watanabe S."/>
            <person name="Yosida M."/>
            <person name="Hotuta T."/>
            <person name="Kusano J."/>
            <person name="Kanehori K."/>
            <person name="Takahashi-Fujii A."/>
            <person name="Hara H."/>
            <person name="Tanase T.-O."/>
            <person name="Nomura Y."/>
            <person name="Togiya S."/>
            <person name="Komai F."/>
            <person name="Hara R."/>
            <person name="Takeuchi K."/>
            <person name="Arita M."/>
            <person name="Imose N."/>
            <person name="Musashino K."/>
            <person name="Yuuki H."/>
            <person name="Oshima A."/>
            <person name="Sasaki N."/>
            <person name="Aotsuka S."/>
            <person name="Yoshikawa Y."/>
            <person name="Matsunawa H."/>
            <person name="Ichihara T."/>
            <person name="Shiohata N."/>
            <person name="Sano S."/>
            <person name="Moriya S."/>
            <person name="Momiyama H."/>
            <person name="Satoh N."/>
            <person name="Takami S."/>
            <person name="Terashima Y."/>
            <person name="Suzuki O."/>
            <person name="Nakagawa S."/>
            <person name="Senoh A."/>
            <person name="Mizoguchi H."/>
            <person name="Goto Y."/>
            <person name="Shimizu F."/>
            <person name="Wakebe H."/>
            <person name="Hishigaki H."/>
            <person name="Watanabe T."/>
            <person name="Sugiyama A."/>
            <person name="Takemoto M."/>
            <person name="Kawakami B."/>
            <person name="Yamazaki M."/>
            <person name="Watanabe K."/>
            <person name="Kumagai A."/>
            <person name="Itakura S."/>
            <person name="Fukuzumi Y."/>
            <person name="Fujimori Y."/>
            <person name="Komiyama M."/>
            <person name="Tashiro H."/>
            <person name="Tanigami A."/>
            <person name="Fujiwara T."/>
            <person name="Ono T."/>
            <person name="Yamada K."/>
            <person name="Fujii Y."/>
            <person name="Ozaki K."/>
            <person name="Hirao M."/>
            <person name="Ohmori Y."/>
            <person name="Kawabata A."/>
            <person name="Hikiji T."/>
            <person name="Kobatake N."/>
            <person name="Inagaki H."/>
            <person name="Ikema Y."/>
            <person name="Okamoto S."/>
            <person name="Okitani R."/>
            <person name="Kawakami T."/>
            <person name="Noguchi S."/>
            <person name="Itoh T."/>
            <person name="Shigeta K."/>
            <person name="Senba T."/>
            <person name="Matsumura K."/>
            <person name="Nakajima Y."/>
            <person name="Mizuno T."/>
            <person name="Morinaga M."/>
            <person name="Sasaki M."/>
            <person name="Togashi T."/>
            <person name="Oyama M."/>
            <person name="Hata H."/>
            <person name="Watanabe M."/>
            <person name="Komatsu T."/>
            <person name="Mizushima-Sugano J."/>
            <person name="Satoh T."/>
            <person name="Shirai Y."/>
            <person name="Takahashi Y."/>
            <person name="Nakagawa K."/>
            <person name="Okumura K."/>
            <person name="Nagase T."/>
            <person name="Nomura N."/>
            <person name="Kikuchi H."/>
            <person name="Masuho Y."/>
            <person name="Yamashita R."/>
            <person name="Nakai K."/>
            <person name="Yada T."/>
            <person name="Nakamura Y."/>
            <person name="Ohara O."/>
            <person name="Isogai T."/>
            <person name="Sugano S."/>
        </authorList>
    </citation>
    <scope>NUCLEOTIDE SEQUENCE [LARGE SCALE MRNA] (ISOFORMS 7; 8 AND 11)</scope>
    <source>
        <tissue>Embryonic brain</tissue>
        <tissue>Thalamus</tissue>
        <tissue>Urinary bladder</tissue>
    </source>
</reference>
<reference key="5">
    <citation type="submission" date="2006-07" db="EMBL/GenBank/DDBJ databases">
        <authorList>
            <person name="Suzuki Y."/>
            <person name="Sugano S."/>
            <person name="Totoki Y."/>
            <person name="Toyoda A."/>
            <person name="Takeda T."/>
            <person name="Sakaki Y."/>
            <person name="Tanaka A."/>
            <person name="Yokoyama S."/>
        </authorList>
    </citation>
    <scope>NUCLEOTIDE SEQUENCE [LARGE SCALE MRNA] (ISOFORMS 9 AND 10)</scope>
    <source>
        <tissue>Heart</tissue>
        <tissue>Hepatoma</tissue>
    </source>
</reference>
<reference key="6">
    <citation type="journal article" date="2005" name="Nature">
        <title>Generation and annotation of the DNA sequences of human chromosomes 2 and 4.</title>
        <authorList>
            <person name="Hillier L.W."/>
            <person name="Graves T.A."/>
            <person name="Fulton R.S."/>
            <person name="Fulton L.A."/>
            <person name="Pepin K.H."/>
            <person name="Minx P."/>
            <person name="Wagner-McPherson C."/>
            <person name="Layman D."/>
            <person name="Wylie K."/>
            <person name="Sekhon M."/>
            <person name="Becker M.C."/>
            <person name="Fewell G.A."/>
            <person name="Delehaunty K.D."/>
            <person name="Miner T.L."/>
            <person name="Nash W.E."/>
            <person name="Kremitzki C."/>
            <person name="Oddy L."/>
            <person name="Du H."/>
            <person name="Sun H."/>
            <person name="Bradshaw-Cordum H."/>
            <person name="Ali J."/>
            <person name="Carter J."/>
            <person name="Cordes M."/>
            <person name="Harris A."/>
            <person name="Isak A."/>
            <person name="van Brunt A."/>
            <person name="Nguyen C."/>
            <person name="Du F."/>
            <person name="Courtney L."/>
            <person name="Kalicki J."/>
            <person name="Ozersky P."/>
            <person name="Abbott S."/>
            <person name="Armstrong J."/>
            <person name="Belter E.A."/>
            <person name="Caruso L."/>
            <person name="Cedroni M."/>
            <person name="Cotton M."/>
            <person name="Davidson T."/>
            <person name="Desai A."/>
            <person name="Elliott G."/>
            <person name="Erb T."/>
            <person name="Fronick C."/>
            <person name="Gaige T."/>
            <person name="Haakenson W."/>
            <person name="Haglund K."/>
            <person name="Holmes A."/>
            <person name="Harkins R."/>
            <person name="Kim K."/>
            <person name="Kruchowski S.S."/>
            <person name="Strong C.M."/>
            <person name="Grewal N."/>
            <person name="Goyea E."/>
            <person name="Hou S."/>
            <person name="Levy A."/>
            <person name="Martinka S."/>
            <person name="Mead K."/>
            <person name="McLellan M.D."/>
            <person name="Meyer R."/>
            <person name="Randall-Maher J."/>
            <person name="Tomlinson C."/>
            <person name="Dauphin-Kohlberg S."/>
            <person name="Kozlowicz-Reilly A."/>
            <person name="Shah N."/>
            <person name="Swearengen-Shahid S."/>
            <person name="Snider J."/>
            <person name="Strong J.T."/>
            <person name="Thompson J."/>
            <person name="Yoakum M."/>
            <person name="Leonard S."/>
            <person name="Pearman C."/>
            <person name="Trani L."/>
            <person name="Radionenko M."/>
            <person name="Waligorski J.E."/>
            <person name="Wang C."/>
            <person name="Rock S.M."/>
            <person name="Tin-Wollam A.-M."/>
            <person name="Maupin R."/>
            <person name="Latreille P."/>
            <person name="Wendl M.C."/>
            <person name="Yang S.-P."/>
            <person name="Pohl C."/>
            <person name="Wallis J.W."/>
            <person name="Spieth J."/>
            <person name="Bieri T.A."/>
            <person name="Berkowicz N."/>
            <person name="Nelson J.O."/>
            <person name="Osborne J."/>
            <person name="Ding L."/>
            <person name="Meyer R."/>
            <person name="Sabo A."/>
            <person name="Shotland Y."/>
            <person name="Sinha P."/>
            <person name="Wohldmann P.E."/>
            <person name="Cook L.L."/>
            <person name="Hickenbotham M.T."/>
            <person name="Eldred J."/>
            <person name="Williams D."/>
            <person name="Jones T.A."/>
            <person name="She X."/>
            <person name="Ciccarelli F.D."/>
            <person name="Izaurralde E."/>
            <person name="Taylor J."/>
            <person name="Schmutz J."/>
            <person name="Myers R.M."/>
            <person name="Cox D.R."/>
            <person name="Huang X."/>
            <person name="McPherson J.D."/>
            <person name="Mardis E.R."/>
            <person name="Clifton S.W."/>
            <person name="Warren W.C."/>
            <person name="Chinwalla A.T."/>
            <person name="Eddy S.R."/>
            <person name="Marra M.A."/>
            <person name="Ovcharenko I."/>
            <person name="Furey T.S."/>
            <person name="Miller W."/>
            <person name="Eichler E.E."/>
            <person name="Bork P."/>
            <person name="Suyama M."/>
            <person name="Torrents D."/>
            <person name="Waterston R.H."/>
            <person name="Wilson R.K."/>
        </authorList>
    </citation>
    <scope>NUCLEOTIDE SEQUENCE [LARGE SCALE GENOMIC DNA]</scope>
</reference>
<reference key="7">
    <citation type="submission" date="2005-09" db="EMBL/GenBank/DDBJ databases">
        <authorList>
            <person name="Mural R.J."/>
            <person name="Istrail S."/>
            <person name="Sutton G.G."/>
            <person name="Florea L."/>
            <person name="Halpern A.L."/>
            <person name="Mobarry C.M."/>
            <person name="Lippert R."/>
            <person name="Walenz B."/>
            <person name="Shatkay H."/>
            <person name="Dew I."/>
            <person name="Miller J.R."/>
            <person name="Flanigan M.J."/>
            <person name="Edwards N.J."/>
            <person name="Bolanos R."/>
            <person name="Fasulo D."/>
            <person name="Halldorsson B.V."/>
            <person name="Hannenhalli S."/>
            <person name="Turner R."/>
            <person name="Yooseph S."/>
            <person name="Lu F."/>
            <person name="Nusskern D.R."/>
            <person name="Shue B.C."/>
            <person name="Zheng X.H."/>
            <person name="Zhong F."/>
            <person name="Delcher A.L."/>
            <person name="Huson D.H."/>
            <person name="Kravitz S.A."/>
            <person name="Mouchard L."/>
            <person name="Reinert K."/>
            <person name="Remington K.A."/>
            <person name="Clark A.G."/>
            <person name="Waterman M.S."/>
            <person name="Eichler E.E."/>
            <person name="Adams M.D."/>
            <person name="Hunkapiller M.W."/>
            <person name="Myers E.W."/>
            <person name="Venter J.C."/>
        </authorList>
    </citation>
    <scope>NUCLEOTIDE SEQUENCE [LARGE SCALE GENOMIC DNA]</scope>
</reference>
<reference key="8">
    <citation type="journal article" date="2004" name="Genome Res.">
        <title>The status, quality, and expansion of the NIH full-length cDNA project: the Mammalian Gene Collection (MGC).</title>
        <authorList>
            <consortium name="The MGC Project Team"/>
        </authorList>
    </citation>
    <scope>NUCLEOTIDE SEQUENCE [LARGE SCALE MRNA] (ISOFORM 3)</scope>
    <source>
        <tissue>Lymph</tissue>
    </source>
</reference>
<reference key="9">
    <citation type="journal article" date="2003" name="Biochem. J.">
        <title>Cbl-ArgBP2 complex mediates ubiquitination and degradation of c-Abl.</title>
        <authorList>
            <person name="Soubeyran P."/>
            <person name="Barac A."/>
            <person name="Szymkiewicz I."/>
            <person name="Dikic I."/>
        </authorList>
    </citation>
    <scope>INTERACTION WITH CBL</scope>
    <scope>UBIQUITINATION BY CBL</scope>
    <scope>FUNCTION</scope>
</reference>
<reference key="10">
    <citation type="journal article" date="2005" name="Exp. Cell Res.">
        <title>Involvement of palladin and alpha-actinin in targeting of the Abl/Arg kinase adaptor ArgBP2 to the actin cytoskeleton.</title>
        <authorList>
            <person name="Roenty M."/>
            <person name="Taivainen A."/>
            <person name="Moza M."/>
            <person name="Kruh G.D."/>
            <person name="Ehler E."/>
            <person name="Carpen O."/>
        </authorList>
    </citation>
    <scope>INTERACTION WITH PALLD AND ACTN</scope>
    <scope>SUBCELLULAR LOCATION</scope>
</reference>
<reference key="11">
    <citation type="journal article" date="2005" name="J. Biol. Chem.">
        <title>ArgBP2gamma interacts with Akt and p21-activated kinase-1 and promotes cell survival.</title>
        <authorList>
            <person name="Yuan Z.-Q."/>
            <person name="Kim D."/>
            <person name="Kaneko S."/>
            <person name="Sussman M."/>
            <person name="Bokoch G.M."/>
            <person name="Kruh G.D."/>
            <person name="Nicosia S.V."/>
            <person name="Testa J.R."/>
            <person name="Cheng J.Q."/>
        </authorList>
    </citation>
    <scope>RETRACTED PAPER</scope>
</reference>
<reference key="12">
    <citation type="journal article" date="2016" name="J. Biol. Chem.">
        <title>ArgBP2gamma interacts with Akt and p21-activated kinase-1 and promotes cell survival.</title>
        <authorList>
            <person name="Yuan Z.Q."/>
            <person name="Kim D."/>
            <person name="Kaneko S."/>
            <person name="Sussman M."/>
            <person name="Bokoch G.M."/>
            <person name="Kruh G.D."/>
            <person name="Nicosia S.V."/>
            <person name="Testa J.R."/>
            <person name="Cheng J.Q."/>
        </authorList>
    </citation>
    <scope>RETRACTION NOTICE OF PUBMED:15784622</scope>
</reference>
<reference key="13">
    <citation type="journal article" date="2008" name="Cancer Res.">
        <title>ArgBP2-dependent signaling regulates pancreatic cell migration, adhesion, and tumorigenicity.</title>
        <authorList>
            <person name="Taieb D."/>
            <person name="Roignot J."/>
            <person name="Andre F."/>
            <person name="Garcia S."/>
            <person name="Masson B."/>
            <person name="Pierres A."/>
            <person name="Iovanna J.L."/>
            <person name="Soubeyran P."/>
        </authorList>
    </citation>
    <scope>FUNCTION</scope>
    <scope>INTERACTION WITH PTPN12 AND WASF1</scope>
    <scope>SUBCELLULAR LOCATION</scope>
    <scope>TISSUE SPECIFICITY</scope>
    <scope>DEPHOSPHORYLATION BY PTPN12</scope>
    <scope>DOMAIN</scope>
</reference>
<reference key="14">
    <citation type="journal article" date="2008" name="Proc. Natl. Acad. Sci. U.S.A.">
        <title>A quantitative atlas of mitotic phosphorylation.</title>
        <authorList>
            <person name="Dephoure N."/>
            <person name="Zhou C."/>
            <person name="Villen J."/>
            <person name="Beausoleil S.A."/>
            <person name="Bakalarski C.E."/>
            <person name="Elledge S.J."/>
            <person name="Gygi S.P."/>
        </authorList>
    </citation>
    <scope>PHOSPHORYLATION [LARGE SCALE ANALYSIS] AT SER-157; THR-277; SER-301 AND SER-302</scope>
    <scope>PHOSPHORYLATION [LARGE SCALE ANALYSIS] AT SER-437 AND SER-439 (ISOFORM 10)</scope>
    <scope>PHOSPHORYLATION [LARGE SCALE ANALYSIS] AT SER-344 AND SER-346 (ISOFORM 12)</scope>
    <scope>PHOSPHORYLATION [LARGE SCALE ANALYSIS] AT SER-258 AND SER-260 (ISOFORM 3)</scope>
    <scope>PHOSPHORYLATION [LARGE SCALE ANALYSIS] AT SER-304 AND SER-306 (ISOFORMS 4 AND 5)</scope>
    <scope>IDENTIFICATION BY MASS SPECTROMETRY [LARGE SCALE ANALYSIS]</scope>
    <source>
        <tissue>Cervix carcinoma</tissue>
    </source>
</reference>
<reference key="15">
    <citation type="journal article" date="2010" name="Sci. Signal.">
        <title>Quantitative phosphoproteomics reveals widespread full phosphorylation site occupancy during mitosis.</title>
        <authorList>
            <person name="Olsen J.V."/>
            <person name="Vermeulen M."/>
            <person name="Santamaria A."/>
            <person name="Kumar C."/>
            <person name="Miller M.L."/>
            <person name="Jensen L.J."/>
            <person name="Gnad F."/>
            <person name="Cox J."/>
            <person name="Jensen T.S."/>
            <person name="Nigg E.A."/>
            <person name="Brunak S."/>
            <person name="Mann M."/>
        </authorList>
    </citation>
    <scope>PHOSPHORYLATION [LARGE SCALE ANALYSIS] AT SER-157; SER-298; SER-299 AND SER-302</scope>
    <scope>PHOSPHORYLATION [LARGE SCALE ANALYSIS] AT SER-437 AND SER-439 (ISOFORM 10)</scope>
    <scope>PHOSPHORYLATION [LARGE SCALE ANALYSIS] AT SER-28 (ISOFORM 11)</scope>
    <scope>PHOSPHORYLATION [LARGE SCALE ANALYSIS] AT SER-344 AND SER-346 (ISOFORM 12)</scope>
    <scope>PHOSPHORYLATION [LARGE SCALE ANALYSIS] AT SER-14 (ISOFORMS 12 AND 9)</scope>
    <scope>PHOSPHORYLATION [LARGE SCALE ANALYSIS] AT SER-258 AND SER-260 (ISOFORM 3)</scope>
    <scope>PHOSPHORYLATION [LARGE SCALE ANALYSIS] AT SER-304 AND SER-306 (ISOFORMS 4 AND 5)</scope>
    <scope>IDENTIFICATION BY MASS SPECTROMETRY [LARGE SCALE ANALYSIS]</scope>
    <source>
        <tissue>Cervix carcinoma</tissue>
    </source>
</reference>
<reference key="16">
    <citation type="journal article" date="2014" name="J. Proteomics">
        <title>An enzyme assisted RP-RPLC approach for in-depth analysis of human liver phosphoproteome.</title>
        <authorList>
            <person name="Bian Y."/>
            <person name="Song C."/>
            <person name="Cheng K."/>
            <person name="Dong M."/>
            <person name="Wang F."/>
            <person name="Huang J."/>
            <person name="Sun D."/>
            <person name="Wang L."/>
            <person name="Ye M."/>
            <person name="Zou H."/>
        </authorList>
    </citation>
    <scope>PHOSPHORYLATION [LARGE SCALE ANALYSIS] AT SER-154; SER-157; SER-239; SER-259; SER-287; THR-292; SER-302; SER-304; SER-843 AND SER-1023</scope>
    <scope>PHOSPHORYLATION [LARGE SCALE ANALYSIS] AT THR-413; THR-415; SER-439; THR-459 AND SER-474 (ISOFORM 10)</scope>
    <scope>PHOSPHORYLATION [LARGE SCALE ANALYSIS] AT SER-27 AND SER-28 (ISOFORM 11)</scope>
    <scope>PHOSPHORYLATION [LARGE SCALE ANALYSIS] AT THR-320; THR-322; SER-346; THR-366 AND SER-381 (ISOFORM 12)</scope>
    <scope>PHOSPHORYLATION [LARGE SCALE ANALYSIS] AT SER-13 AND SER-14 (ISOFORMS 12 AND 9)</scope>
    <scope>PHOSPHORYLATION [LARGE SCALE ANALYSIS] AT SER-316 (ISOFORM 2)</scope>
    <scope>PHOSPHORYLATION [LARGE SCALE ANALYSIS] AT THR-234; THR-236; SER-260 AND SER-295 (ISOFORM 3)</scope>
    <scope>PHOSPHORYLATION [LARGE SCALE ANALYSIS] AT THR-280 (ISOFORMS 3; 4 AND 5)</scope>
    <scope>PHOSPHORYLATION [LARGE SCALE ANALYSIS] AT THR-282; SER-306; THR-326 AND SER-341 (ISOFORMS 4 AND 5)</scope>
    <scope>PHOSPHORYLATION [LARGE SCALE ANALYSIS] AT SER-311 (ISOFORM 8)</scope>
    <scope>IDENTIFICATION BY MASS SPECTROMETRY [LARGE SCALE ANALYSIS]</scope>
    <source>
        <tissue>Liver</tissue>
    </source>
</reference>
<keyword id="KW-0002">3D-structure</keyword>
<keyword id="KW-0025">Alternative splicing</keyword>
<keyword id="KW-0027">Amidation</keyword>
<keyword id="KW-0965">Cell junction</keyword>
<keyword id="KW-1003">Cell membrane</keyword>
<keyword id="KW-0966">Cell projection</keyword>
<keyword id="KW-0963">Cytoplasm</keyword>
<keyword id="KW-0472">Membrane</keyword>
<keyword id="KW-0597">Phosphoprotein</keyword>
<keyword id="KW-1267">Proteomics identification</keyword>
<keyword id="KW-1185">Reference proteome</keyword>
<keyword id="KW-0677">Repeat</keyword>
<keyword id="KW-0728">SH3 domain</keyword>
<keyword id="KW-0832">Ubl conjugation</keyword>
<protein>
    <recommendedName>
        <fullName>Sorbin and SH3 domain-containing protein 2</fullName>
    </recommendedName>
    <alternativeName>
        <fullName>Arg-binding protein 2</fullName>
        <shortName>ArgBP2</shortName>
    </alternativeName>
    <alternativeName>
        <fullName>Arg/Abl-interacting protein 2</fullName>
    </alternativeName>
    <alternativeName>
        <fullName>Sorbin</fullName>
    </alternativeName>
</protein>
<organism>
    <name type="scientific">Homo sapiens</name>
    <name type="common">Human</name>
    <dbReference type="NCBI Taxonomy" id="9606"/>
    <lineage>
        <taxon>Eukaryota</taxon>
        <taxon>Metazoa</taxon>
        <taxon>Chordata</taxon>
        <taxon>Craniata</taxon>
        <taxon>Vertebrata</taxon>
        <taxon>Euteleostomi</taxon>
        <taxon>Mammalia</taxon>
        <taxon>Eutheria</taxon>
        <taxon>Euarchontoglires</taxon>
        <taxon>Primates</taxon>
        <taxon>Haplorrhini</taxon>
        <taxon>Catarrhini</taxon>
        <taxon>Hominidae</taxon>
        <taxon>Homo</taxon>
    </lineage>
</organism>
<gene>
    <name type="primary">SORBS2</name>
    <name type="synonym">ARGBP2</name>
    <name type="synonym">KIAA0777</name>
</gene>
<accession>O94875</accession>
<accession>A6NEK9</accession>
<accession>B3KPQ7</accession>
<accession>B7Z1G5</accession>
<accession>B7Z3X6</accession>
<accession>C9JKV9</accession>
<accession>D3DP62</accession>
<accession>D3DP63</accession>
<accession>E9PAS5</accession>
<accession>E9PAW4</accession>
<accession>G3XAI0</accession>
<accession>H7BXR4</accession>
<accession>J3KNZ5</accession>
<accession>O60592</accession>
<accession>O60593</accession>
<accession>Q96EX0</accession>
<proteinExistence type="evidence at protein level"/>
<feature type="chain" id="PRO_0000344477" description="Sorbin and SH3 domain-containing protein 2">
    <location>
        <begin position="1"/>
        <end position="1100"/>
    </location>
</feature>
<feature type="domain" description="SoHo" evidence="5">
    <location>
        <begin position="66"/>
        <end position="127"/>
    </location>
</feature>
<feature type="domain" description="SH3 1" evidence="4">
    <location>
        <begin position="863"/>
        <end position="922"/>
    </location>
</feature>
<feature type="domain" description="SH3 2" evidence="4">
    <location>
        <begin position="938"/>
        <end position="999"/>
    </location>
</feature>
<feature type="domain" description="SH3 3" evidence="4">
    <location>
        <begin position="1041"/>
        <end position="1100"/>
    </location>
</feature>
<feature type="region of interest" description="Disordered" evidence="6">
    <location>
        <begin position="30"/>
        <end position="57"/>
    </location>
</feature>
<feature type="region of interest" description="Disordered" evidence="6">
    <location>
        <begin position="134"/>
        <end position="311"/>
    </location>
</feature>
<feature type="region of interest" description="Disordered" evidence="6">
    <location>
        <begin position="807"/>
        <end position="866"/>
    </location>
</feature>
<feature type="compositionally biased region" description="Polar residues" evidence="6">
    <location>
        <begin position="30"/>
        <end position="52"/>
    </location>
</feature>
<feature type="compositionally biased region" description="Polar residues" evidence="6">
    <location>
        <begin position="134"/>
        <end position="147"/>
    </location>
</feature>
<feature type="compositionally biased region" description="Pro residues" evidence="6">
    <location>
        <begin position="167"/>
        <end position="180"/>
    </location>
</feature>
<feature type="compositionally biased region" description="Basic and acidic residues" evidence="6">
    <location>
        <begin position="181"/>
        <end position="217"/>
    </location>
</feature>
<feature type="compositionally biased region" description="Low complexity" evidence="6">
    <location>
        <begin position="287"/>
        <end position="304"/>
    </location>
</feature>
<feature type="compositionally biased region" description="Polar residues" evidence="6">
    <location>
        <begin position="812"/>
        <end position="824"/>
    </location>
</feature>
<feature type="compositionally biased region" description="Basic and acidic residues" evidence="6">
    <location>
        <begin position="825"/>
        <end position="839"/>
    </location>
</feature>
<feature type="compositionally biased region" description="Basic and acidic residues" evidence="6">
    <location>
        <begin position="853"/>
        <end position="866"/>
    </location>
</feature>
<feature type="modified residue" description="Phosphoserine" evidence="3">
    <location>
        <position position="30"/>
    </location>
</feature>
<feature type="modified residue" description="Phosphoserine" evidence="3">
    <location>
        <position position="43"/>
    </location>
</feature>
<feature type="modified residue" description="Phosphoserine" evidence="22">
    <location>
        <position position="154"/>
    </location>
</feature>
<feature type="modified residue" description="Phosphoserine" evidence="20 21 22">
    <location>
        <position position="157"/>
    </location>
</feature>
<feature type="modified residue" description="Phosphoserine" evidence="22">
    <location>
        <position position="239"/>
    </location>
</feature>
<feature type="modified residue" description="Phosphoserine" evidence="3">
    <location>
        <position position="245"/>
    </location>
</feature>
<feature type="modified residue" description="Phosphoserine" evidence="3">
    <location>
        <position position="248"/>
    </location>
</feature>
<feature type="modified residue" description="Phosphoserine" evidence="22">
    <location>
        <position position="259"/>
    </location>
</feature>
<feature type="modified residue" description="Phosphothreonine" evidence="20">
    <location>
        <position position="277"/>
    </location>
</feature>
<feature type="modified residue" description="Phosphoserine" evidence="22">
    <location>
        <position position="287"/>
    </location>
</feature>
<feature type="modified residue" description="Phosphothreonine" evidence="22">
    <location>
        <position position="292"/>
    </location>
</feature>
<feature type="modified residue" description="Phosphoserine" evidence="3">
    <location>
        <position position="297"/>
    </location>
</feature>
<feature type="modified residue" description="Phosphoserine" evidence="21">
    <location>
        <position position="298"/>
    </location>
</feature>
<feature type="modified residue" description="Phosphoserine" evidence="21">
    <location>
        <position position="299"/>
    </location>
</feature>
<feature type="modified residue" description="Phosphoserine" evidence="20">
    <location>
        <position position="301"/>
    </location>
</feature>
<feature type="modified residue" description="Phosphoserine" evidence="20 21 22">
    <location>
        <position position="302"/>
    </location>
</feature>
<feature type="modified residue" description="Phosphoserine" evidence="22">
    <location>
        <position position="304"/>
    </location>
</feature>
<feature type="modified residue" description="Phosphoserine" evidence="3">
    <location>
        <position position="383"/>
    </location>
</feature>
<feature type="modified residue" description="Phosphoserine" evidence="2">
    <location>
        <position position="494"/>
    </location>
</feature>
<feature type="modified residue" description="Phosphoserine" evidence="3">
    <location>
        <position position="497"/>
    </location>
</feature>
<feature type="modified residue" description="Phosphoserine" evidence="3">
    <location>
        <position position="550"/>
    </location>
</feature>
<feature type="modified residue" description="Phosphoserine" evidence="3">
    <location>
        <position position="750"/>
    </location>
</feature>
<feature type="modified residue" description="Phosphoserine" evidence="22">
    <location>
        <position position="843"/>
    </location>
</feature>
<feature type="modified residue" description="Phosphoserine" evidence="3">
    <location>
        <position position="1017"/>
    </location>
</feature>
<feature type="modified residue" description="Phosphoserine" evidence="22">
    <location>
        <position position="1023"/>
    </location>
</feature>
<feature type="splice variant" id="VSP_043665" description="In isoform 7." evidence="14">
    <original>MSYYQRPFSPSAYSLPASLNSSIVMQHGTSLDSTDTYPQHAQSLDGTTSSSIPLYRSSEEEKRVTVIKAPHYPGIGPVDESGIPTAIRT</original>
    <variation>MKATTPLQ</variation>
    <location>
        <begin position="1"/>
        <end position="89"/>
    </location>
</feature>
<feature type="splice variant" id="VSP_034791" description="In isoform 6." evidence="13">
    <location>
        <begin position="1"/>
        <end position="81"/>
    </location>
</feature>
<feature type="splice variant" id="VSP_046220" description="In isoform 10." evidence="17">
    <original>M</original>
    <variation>MYSNEDSRQTIVYSEESNTTMSYTQKITNPLPAASSTDPAPFANINTPVLQEDYRQDSQTRRISTLKLTHNQDLGSSSPISTPQFSKSVEVPSFLKRPRSLTPNPVPETHTASLSIQIAPLSGQDLESHKQLPELSPETAKIPLQQERQKSAVAAASQSSDCRVSQITVNGNSGGAVSPM</variation>
    <location>
        <position position="1"/>
    </location>
</feature>
<feature type="splice variant" id="VSP_047056" description="In isoform 11." evidence="14">
    <original>M</original>
    <variation>MNTDSGGCARKRAAMSVTLTSVKRVQSSPNLLAAGRDSQSPDSAWRSYNDGNQETLNGDATYSSLAAKGFRSVRPNLQDKRSPTQSQITVNGNSGGAVSPM</variation>
    <location>
        <position position="1"/>
    </location>
</feature>
<feature type="splice variant" id="VSP_034792" description="In isoform 2, isoform 4 and isoform 5." evidence="16">
    <original>M</original>
    <variation>MNTGRDSQSPDSAKGFRSVRPNLQDKRSPTQSQITVNGNSGGAVSPM</variation>
    <location>
        <position position="1"/>
    </location>
</feature>
<feature type="splice variant" id="VSP_045640" description="In isoform 8." evidence="14">
    <original>M</original>
    <variation>MNTGRDSQSPDSAWRSYNDGNQETLNGDATYSSLAAKGFRSVRPNLQDKRSPTQSQITVNGNSGGAVSPM</variation>
    <location>
        <position position="1"/>
    </location>
</feature>
<feature type="splice variant" id="VSP_046219" description="In isoform 9 and isoform 12." evidence="17">
    <original>M</original>
    <variation>MSVTLTSVKRVQSSPNLLAAGRDSQSPDSAWRSYNDGNQETLNGDATYSSLAAKGFRSVRPNLQDKRSPTQSQITVNGNSGGAVSPM</variation>
    <location>
        <position position="1"/>
    </location>
</feature>
<feature type="splice variant" id="VSP_034793" description="In isoform 6." evidence="13">
    <original>GIPTAIRT</original>
    <variation>MKATTPLQ</variation>
    <location>
        <begin position="82"/>
        <end position="89"/>
    </location>
</feature>
<feature type="splice variant" id="VSP_043666" description="In isoform 7 and isoform 9." evidence="14 17">
    <location>
        <begin position="112"/>
        <end position="126"/>
    </location>
</feature>
<feature type="splice variant" id="VSP_034794" description="In isoform 2." evidence="16">
    <original>P</original>
    <variation>PTDRINPDDIDLENEPWYKFFSELEFGRPPPKKPLDYVQDHSSGVFNE</variation>
    <location>
        <position position="228"/>
    </location>
</feature>
<feature type="splice variant" id="VSP_034795" description="In isoform 3, isoform 4, isoform 5, isoform 10 and isoform 12." evidence="15 16 17">
    <original>P</original>
    <variation>PPPLPTTPTPVPREPGRKPLSSSRLGEVTGSPSPPPRSGAPTPSSRAPALSPTRPPKKPLDYVQDHSSGVFNE</variation>
    <location>
        <position position="228"/>
    </location>
</feature>
<feature type="splice variant" id="VSP_045641" description="In isoform 8." evidence="14">
    <original>P</original>
    <variation>PPPKKPLDYVQDHSSGVFNE</variation>
    <location>
        <position position="228"/>
    </location>
</feature>
<feature type="splice variant" id="VSP_034796" description="In isoform 6." evidence="13">
    <original>ASLYQSSID</original>
    <variation>VSKPQAGRR</variation>
    <location>
        <begin position="229"/>
        <end position="237"/>
    </location>
</feature>
<feature type="splice variant" id="VSP_034797" description="In isoform 6." evidence="13">
    <location>
        <begin position="238"/>
        <end position="1100"/>
    </location>
</feature>
<feature type="splice variant" id="VSP_034798" description="In isoform 2, isoform 3, isoform 4, isoform 5, isoform 8, isoform 9, isoform 10 and isoform 12." evidence="14 15 16 17">
    <location>
        <begin position="308"/>
        <end position="834"/>
    </location>
</feature>
<feature type="splice variant" id="VSP_034799" description="In isoform 5." evidence="16">
    <original>YNYTPRNEDELELRESDVIDVMEKCDDGWFVGTSRRTKFFGTFPGNYVKRL</original>
    <variation>GYTLT</variation>
    <location>
        <begin position="1050"/>
        <end position="1100"/>
    </location>
</feature>
<feature type="sequence variant" id="VAR_045624" description="In dbSNP:rs725185.">
    <original>A</original>
    <variation>V</variation>
    <location>
        <position position="1048"/>
    </location>
</feature>
<feature type="sequence conflict" description="In Ref. 5; AK225327." evidence="18" ref="5">
    <original>P</original>
    <variation>L</variation>
    <location>
        <position position="73"/>
    </location>
</feature>
<feature type="sequence conflict" description="In Ref. 5; AK225327." evidence="18" ref="5">
    <original>R</original>
    <variation>Q</variation>
    <location>
        <position position="206"/>
    </location>
</feature>
<feature type="sequence conflict" description="In Ref. 4; BAG51769." evidence="18" ref="4">
    <original>L</original>
    <variation>S</variation>
    <location>
        <position position="231"/>
    </location>
</feature>
<feature type="sequence conflict" description="In Ref. 4; BAG51769." evidence="18" ref="4">
    <original>L</original>
    <variation>P</variation>
    <location>
        <position position="536"/>
    </location>
</feature>
<feature type="sequence conflict" description="In Ref. 4; BAG51769." evidence="18" ref="4">
    <original>Y</original>
    <variation>N</variation>
    <location>
        <position position="891"/>
    </location>
</feature>
<feature type="sequence conflict" description="In Ref. 4; BAH11501." evidence="18" ref="4">
    <original>F</original>
    <variation>L</variation>
    <location>
        <position position="1034"/>
    </location>
</feature>
<feature type="strand" evidence="23">
    <location>
        <begin position="866"/>
        <end position="872"/>
    </location>
</feature>
<feature type="strand" evidence="23">
    <location>
        <begin position="889"/>
        <end position="905"/>
    </location>
</feature>
<feature type="strand" evidence="23">
    <location>
        <begin position="908"/>
        <end position="913"/>
    </location>
</feature>
<feature type="helix" evidence="23">
    <location>
        <begin position="914"/>
        <end position="916"/>
    </location>
</feature>
<feature type="strand" evidence="23">
    <location>
        <begin position="917"/>
        <end position="919"/>
    </location>
</feature>
<feature type="modified residue" description="Phosphoserine" evidence="22">
    <location sequence="O94875-2">
        <position position="316"/>
    </location>
</feature>
<feature type="sequence conflict" description="In Ref. 1; AAC05509." evidence="18" ref="1">
    <original>A</original>
    <variation>P</variation>
    <location sequence="O94875-2">
        <position position="13"/>
    </location>
</feature>
<feature type="modified residue" description="Phosphothreonine" evidence="22">
    <location sequence="O94875-3">
        <position position="234"/>
    </location>
</feature>
<feature type="modified residue" description="Phosphothreonine" evidence="22">
    <location sequence="O94875-3">
        <position position="236"/>
    </location>
</feature>
<feature type="modified residue" description="Phosphoserine" evidence="20 21">
    <location sequence="O94875-3">
        <position position="258"/>
    </location>
</feature>
<feature type="modified residue" description="Phosphoserine" evidence="20 21 22">
    <location sequence="O94875-3">
        <position position="260"/>
    </location>
</feature>
<feature type="modified residue" description="Phosphothreonine" evidence="22">
    <location sequence="O94875-3">
        <position position="280"/>
    </location>
</feature>
<feature type="modified residue" description="Phosphoserine" evidence="22">
    <location sequence="O94875-3">
        <position position="295"/>
    </location>
</feature>
<feature type="modified residue" description="Phosphothreonine" evidence="22">
    <location sequence="O94875-4">
        <position position="280"/>
    </location>
</feature>
<feature type="modified residue" description="Phosphothreonine" evidence="22">
    <location sequence="O94875-4">
        <position position="282"/>
    </location>
</feature>
<feature type="modified residue" description="Phosphoserine" evidence="20 21">
    <location sequence="O94875-4">
        <position position="304"/>
    </location>
</feature>
<feature type="modified residue" description="Phosphoserine" evidence="20 21 22">
    <location sequence="O94875-4">
        <position position="306"/>
    </location>
</feature>
<feature type="modified residue" description="Phosphothreonine" evidence="22">
    <location sequence="O94875-4">
        <position position="326"/>
    </location>
</feature>
<feature type="modified residue" description="Phosphoserine" evidence="22">
    <location sequence="O94875-4">
        <position position="341"/>
    </location>
</feature>
<feature type="modified residue" description="Phosphothreonine" evidence="22">
    <location sequence="O94875-5">
        <position position="280"/>
    </location>
</feature>
<feature type="modified residue" description="Phosphothreonine" evidence="22">
    <location sequence="O94875-5">
        <position position="282"/>
    </location>
</feature>
<feature type="modified residue" description="Phosphoserine" evidence="20 21">
    <location sequence="O94875-5">
        <position position="304"/>
    </location>
</feature>
<feature type="modified residue" description="Phosphoserine" evidence="20 21 22">
    <location sequence="O94875-5">
        <position position="306"/>
    </location>
</feature>
<feature type="modified residue" description="Phosphothreonine" evidence="22">
    <location sequence="O94875-5">
        <position position="326"/>
    </location>
</feature>
<feature type="modified residue" description="Phosphoserine" evidence="22">
    <location sequence="O94875-5">
        <position position="341"/>
    </location>
</feature>
<feature type="sequence conflict" description="In Ref. 1; AAC05508." evidence="18" ref="1">
    <original>A</original>
    <variation>P</variation>
    <location sequence="O94875-5">
        <position position="13"/>
    </location>
</feature>
<feature type="modified residue" description="Alanine amide" evidence="7">
    <location sequence="O94875-6">
        <position position="153"/>
    </location>
</feature>
<feature type="modified residue" description="Phosphoserine" evidence="22">
    <location sequence="O94875-8">
        <position position="311"/>
    </location>
</feature>
<feature type="modified residue" description="Phosphoserine" evidence="22">
    <location sequence="O94875-9">
        <position position="13"/>
    </location>
</feature>
<feature type="modified residue" description="Phosphoserine" evidence="21 22">
    <location sequence="O94875-9">
        <position position="14"/>
    </location>
</feature>
<feature type="modified residue" description="Phosphothreonine" evidence="22">
    <location sequence="O94875-10">
        <position position="413"/>
    </location>
</feature>
<feature type="modified residue" description="Phosphothreonine" evidence="22">
    <location sequence="O94875-10">
        <position position="415"/>
    </location>
</feature>
<feature type="modified residue" description="Phosphoserine" evidence="20 21">
    <location sequence="O94875-10">
        <position position="437"/>
    </location>
</feature>
<feature type="modified residue" description="Phosphoserine" evidence="20 21 22">
    <location sequence="O94875-10">
        <position position="439"/>
    </location>
</feature>
<feature type="modified residue" description="Phosphothreonine" evidence="22">
    <location sequence="O94875-10">
        <position position="459"/>
    </location>
</feature>
<feature type="modified residue" description="Phosphoserine" evidence="22">
    <location sequence="O94875-10">
        <position position="474"/>
    </location>
</feature>
<feature type="sequence conflict" description="In Ref. 5; AK225812." evidence="18" ref="5">
    <original>K</original>
    <variation>E</variation>
    <location sequence="O94875-10">
        <position position="424"/>
    </location>
</feature>
<feature type="modified residue" description="Phosphoserine" evidence="22">
    <location sequence="O94875-11">
        <position position="27"/>
    </location>
</feature>
<feature type="modified residue" description="Phosphoserine" evidence="21 22">
    <location sequence="O94875-11">
        <position position="28"/>
    </location>
</feature>
<feature type="modified residue" description="Phosphoserine" evidence="22">
    <location sequence="O94875-12">
        <position position="13"/>
    </location>
</feature>
<feature type="modified residue" description="Phosphoserine" evidence="21 22">
    <location sequence="O94875-12">
        <position position="14"/>
    </location>
</feature>
<feature type="modified residue" description="Phosphothreonine" evidence="22">
    <location sequence="O94875-12">
        <position position="320"/>
    </location>
</feature>
<feature type="modified residue" description="Phosphothreonine" evidence="22">
    <location sequence="O94875-12">
        <position position="322"/>
    </location>
</feature>
<feature type="modified residue" description="Phosphoserine" evidence="20 21">
    <location sequence="O94875-12">
        <position position="344"/>
    </location>
</feature>
<feature type="modified residue" description="Phosphoserine" evidence="20 21 22">
    <location sequence="O94875-12">
        <position position="346"/>
    </location>
</feature>
<feature type="modified residue" description="Phosphothreonine" evidence="22">
    <location sequence="O94875-12">
        <position position="366"/>
    </location>
</feature>
<feature type="modified residue" description="Phosphoserine" evidence="22">
    <location sequence="O94875-12">
        <position position="381"/>
    </location>
</feature>
<evidence type="ECO:0000250" key="1"/>
<evidence type="ECO:0000250" key="2">
    <source>
        <dbReference type="UniProtKB" id="O35413"/>
    </source>
</evidence>
<evidence type="ECO:0000250" key="3">
    <source>
        <dbReference type="UniProtKB" id="Q3UTJ2"/>
    </source>
</evidence>
<evidence type="ECO:0000255" key="4">
    <source>
        <dbReference type="PROSITE-ProRule" id="PRU00192"/>
    </source>
</evidence>
<evidence type="ECO:0000255" key="5">
    <source>
        <dbReference type="PROSITE-ProRule" id="PRU00195"/>
    </source>
</evidence>
<evidence type="ECO:0000256" key="6">
    <source>
        <dbReference type="SAM" id="MobiDB-lite"/>
    </source>
</evidence>
<evidence type="ECO:0000269" key="7">
    <source>
    </source>
</evidence>
<evidence type="ECO:0000269" key="8">
    <source>
    </source>
</evidence>
<evidence type="ECO:0000269" key="9">
    <source>
    </source>
</evidence>
<evidence type="ECO:0000269" key="10">
    <source>
    </source>
</evidence>
<evidence type="ECO:0000269" key="11">
    <source>
    </source>
</evidence>
<evidence type="ECO:0000269" key="12">
    <source>
    </source>
</evidence>
<evidence type="ECO:0000303" key="13">
    <source>
    </source>
</evidence>
<evidence type="ECO:0000303" key="14">
    <source>
    </source>
</evidence>
<evidence type="ECO:0000303" key="15">
    <source>
    </source>
</evidence>
<evidence type="ECO:0000303" key="16">
    <source>
    </source>
</evidence>
<evidence type="ECO:0000303" key="17">
    <source ref="5"/>
</evidence>
<evidence type="ECO:0000305" key="18"/>
<evidence type="ECO:0000305" key="19">
    <source>
    </source>
</evidence>
<evidence type="ECO:0007744" key="20">
    <source>
    </source>
</evidence>
<evidence type="ECO:0007744" key="21">
    <source>
    </source>
</evidence>
<evidence type="ECO:0007744" key="22">
    <source>
    </source>
</evidence>
<evidence type="ECO:0007829" key="23">
    <source>
        <dbReference type="PDB" id="5VEI"/>
    </source>
</evidence>
<comment type="function">
    <text evidence="8 11 12">Adapter protein that plays a role in the assembling of signaling complexes, being a link between ABL kinases and actin cytoskeleton. Can form complex with ABL1 and CBL, thus promoting ubiquitination and degradation of ABL1. May play a role in the regulation of pancreatic cell adhesion, possibly by acting on WASF1 phosphorylation, enhancing phosphorylation by ABL1, as well as dephosphorylation by PTPN12 (PubMed:18559503). Isoform 6 increases water and sodium absorption in the intestine and gall-bladder.</text>
</comment>
<comment type="subunit">
    <text evidence="1 8 10 11 12">Interacts with ABL, CBL, DNM1, DNM2, FLOT1, AFDN, PTK2B/PYK2, SAPAP, SPTAN1, SYNJ1, SYNJ2, VCL/vinculin and WASF (By similarity). Interacts with ABL1/c-Abl, ABL2/v-Abl/Arg, ACTN, CBL and PALLD. Interacts with PTPN12 and WASF1 via its SH3 domains; this interaction may mediate the partial PTPN12 and WASF1 translocation to focal adhesion sites.</text>
</comment>
<comment type="interaction">
    <interactant intactId="EBI-311323">
        <id>O94875</id>
    </interactant>
    <interactant intactId="EBI-1166928">
        <id>Q8N5M1</id>
        <label>ATPAF2</label>
    </interactant>
    <organismsDiffer>false</organismsDiffer>
    <experiments>3</experiments>
</comment>
<comment type="interaction">
    <interactant intactId="EBI-311323">
        <id>O94875</id>
    </interactant>
    <interactant intactId="EBI-718488">
        <id>O43281</id>
        <label>EFS</label>
    </interactant>
    <organismsDiffer>false</organismsDiffer>
    <experiments>3</experiments>
</comment>
<comment type="interaction">
    <interactant intactId="EBI-311323">
        <id>O94875</id>
    </interactant>
    <interactant intactId="EBI-10190883">
        <id>V9HW98</id>
        <label>HEL2</label>
    </interactant>
    <organismsDiffer>false</organismsDiffer>
    <experiments>3</experiments>
</comment>
<comment type="interaction">
    <interactant intactId="EBI-311323">
        <id>O94875</id>
    </interactant>
    <interactant intactId="EBI-713635">
        <id>O43639</id>
        <label>NCK2</label>
    </interactant>
    <organismsDiffer>false</organismsDiffer>
    <experiments>3</experiments>
</comment>
<comment type="interaction">
    <interactant intactId="EBI-311323">
        <id>O94875</id>
    </interactant>
    <interactant intactId="EBI-1045887">
        <id>Q13177</id>
        <label>PAK2</label>
    </interactant>
    <organismsDiffer>false</organismsDiffer>
    <experiments>2</experiments>
</comment>
<comment type="interaction">
    <interactant intactId="EBI-311323">
        <id>O94875</id>
    </interactant>
    <interactant intactId="EBI-2803991">
        <id>Q8WX93</id>
        <label>PALLD</label>
    </interactant>
    <organismsDiffer>false</organismsDiffer>
    <experiments>2</experiments>
</comment>
<comment type="interaction">
    <interactant intactId="EBI-311323">
        <id>O94875</id>
    </interactant>
    <interactant intactId="EBI-476295">
        <id>P31947</id>
        <label>SFN</label>
    </interactant>
    <organismsDiffer>false</organismsDiffer>
    <experiments>4</experiments>
</comment>
<comment type="interaction">
    <interactant intactId="EBI-311323">
        <id>O94875</id>
    </interactant>
    <interactant intactId="EBI-10308083">
        <id>Q9H788-2</id>
        <label>SH2D4A</label>
    </interactant>
    <organismsDiffer>false</organismsDiffer>
    <experiments>3</experiments>
</comment>
<comment type="interaction">
    <interactant intactId="EBI-311323">
        <id>O94875</id>
    </interactant>
    <interactant intactId="EBI-2559305">
        <id>A5D8V6</id>
        <label>VPS37C</label>
    </interactant>
    <organismsDiffer>false</organismsDiffer>
    <experiments>3</experiments>
</comment>
<comment type="interaction">
    <interactant intactId="EBI-311323">
        <id>O94875</id>
    </interactant>
    <interactant intactId="EBI-346375">
        <id>P42768</id>
        <label>WAS</label>
    </interactant>
    <organismsDiffer>false</organismsDiffer>
    <experiments>3</experiments>
</comment>
<comment type="interaction">
    <interactant intactId="EBI-311323">
        <id>O94875</id>
    </interactant>
    <interactant intactId="EBI-356498">
        <id>P62258</id>
        <label>YWHAE</label>
    </interactant>
    <organismsDiffer>false</organismsDiffer>
    <experiments>4</experiments>
</comment>
<comment type="interaction">
    <interactant intactId="EBI-311323">
        <id>O94875</id>
    </interactant>
    <interactant intactId="EBI-347088">
        <id>P63104</id>
        <label>YWHAZ</label>
    </interactant>
    <organismsDiffer>false</organismsDiffer>
    <experiments>4</experiments>
</comment>
<comment type="interaction">
    <interactant intactId="EBI-311323">
        <id>O94875</id>
    </interactant>
    <interactant intactId="EBI-6863748">
        <id>PRO_0000037551</id>
        <dbReference type="UniProtKB" id="Q9WMX2"/>
    </interactant>
    <organismsDiffer>true</organismsDiffer>
    <experiments>2</experiments>
</comment>
<comment type="interaction">
    <interactant intactId="EBI-12037893">
        <id>O94875-10</id>
    </interactant>
    <interactant intactId="EBI-11743294">
        <id>Q8IZP0-5</id>
        <label>ABI1</label>
    </interactant>
    <organismsDiffer>false</organismsDiffer>
    <experiments>3</experiments>
</comment>
<comment type="interaction">
    <interactant intactId="EBI-12037893">
        <id>O94875-10</id>
    </interactant>
    <interactant intactId="EBI-351526">
        <id>O43707</id>
        <label>ACTN4</label>
    </interactant>
    <organismsDiffer>false</organismsDiffer>
    <experiments>4</experiments>
</comment>
<comment type="interaction">
    <interactant intactId="EBI-12037893">
        <id>O94875-10</id>
    </interactant>
    <interactant intactId="EBI-1166928">
        <id>Q8N5M1</id>
        <label>ATPAF2</label>
    </interactant>
    <organismsDiffer>false</organismsDiffer>
    <experiments>3</experiments>
</comment>
<comment type="interaction">
    <interactant intactId="EBI-12037893">
        <id>O94875-10</id>
    </interactant>
    <interactant intactId="EBI-744027">
        <id>Q13191</id>
        <label>CBLB</label>
    </interactant>
    <organismsDiffer>false</organismsDiffer>
    <experiments>3</experiments>
</comment>
<comment type="interaction">
    <interactant intactId="EBI-12037893">
        <id>O94875-10</id>
    </interactant>
    <interactant intactId="EBI-12000556">
        <id>Q9Y2H0-1</id>
        <label>DLGAP4</label>
    </interactant>
    <organismsDiffer>false</organismsDiffer>
    <experiments>3</experiments>
</comment>
<comment type="interaction">
    <interactant intactId="EBI-12037893">
        <id>O94875-10</id>
    </interactant>
    <interactant intactId="EBI-11525448">
        <id>O43281-2</id>
        <label>EFS</label>
    </interactant>
    <organismsDiffer>false</organismsDiffer>
    <experiments>3</experiments>
</comment>
<comment type="interaction">
    <interactant intactId="EBI-12037893">
        <id>O94875-10</id>
    </interactant>
    <interactant intactId="EBI-709735">
        <id>O15372</id>
        <label>EIF3H</label>
    </interactant>
    <organismsDiffer>false</organismsDiffer>
    <experiments>3</experiments>
</comment>
<comment type="interaction">
    <interactant intactId="EBI-12037893">
        <id>O94875-10</id>
    </interactant>
    <interactant intactId="EBI-618309">
        <id>Q08379</id>
        <label>GOLGA2</label>
    </interactant>
    <organismsDiffer>false</organismsDiffer>
    <experiments>3</experiments>
</comment>
<comment type="interaction">
    <interactant intactId="EBI-12037893">
        <id>O94875-10</id>
    </interactant>
    <interactant intactId="EBI-1539606">
        <id>O14512</id>
        <label>SOCS7</label>
    </interactant>
    <organismsDiffer>false</organismsDiffer>
    <experiments>3</experiments>
</comment>
<comment type="interaction">
    <interactant intactId="EBI-12037893">
        <id>O94875-10</id>
    </interactant>
    <interactant intactId="EBI-12037893">
        <id>O94875-10</id>
        <label>SORBS2</label>
    </interactant>
    <organismsDiffer>false</organismsDiffer>
    <experiments>3</experiments>
</comment>
<comment type="interaction">
    <interactant intactId="EBI-12037893">
        <id>O94875-10</id>
    </interactant>
    <interactant intactId="EBI-11139477">
        <id>Q96N21</id>
        <label>TEPSIN</label>
    </interactant>
    <organismsDiffer>false</organismsDiffer>
    <experiments>3</experiments>
</comment>
<comment type="interaction">
    <interactant intactId="EBI-12037893">
        <id>O94875-10</id>
    </interactant>
    <interactant intactId="EBI-2559305">
        <id>A5D8V6</id>
        <label>VPS37C</label>
    </interactant>
    <organismsDiffer>false</organismsDiffer>
    <experiments>3</experiments>
</comment>
<comment type="interaction">
    <interactant intactId="EBI-12037893">
        <id>O94875-10</id>
    </interactant>
    <interactant intactId="EBI-957615">
        <id>O00401</id>
        <label>WASL</label>
    </interactant>
    <organismsDiffer>false</organismsDiffer>
    <experiments>3</experiments>
</comment>
<comment type="subcellular location">
    <subcellularLocation>
        <location evidence="10 12">Cytoplasm</location>
        <location evidence="10 12">Perinuclear region</location>
    </subcellularLocation>
    <subcellularLocation>
        <location evidence="11">Apical cell membrane</location>
    </subcellularLocation>
    <subcellularLocation>
        <location evidence="11">Cell junction</location>
        <location evidence="11">Focal adhesion</location>
    </subcellularLocation>
    <subcellularLocation>
        <location evidence="11">Cell projection</location>
        <location evidence="11">Lamellipodium</location>
    </subcellularLocation>
    <text evidence="11">Found at the Z-disk sarcomeres, stress fibers, dense bodies and focal adhesion. In pancreatic acinar cells, localized preferentially to the apical membrane. Colocalized with vinculin and filamentous actin at focal adhesions and lamellipodia of pancreatic cells.</text>
</comment>
<comment type="alternative products">
    <event type="alternative splicing"/>
    <isoform>
        <id>O94875-1</id>
        <name>1</name>
        <sequence type="displayed"/>
    </isoform>
    <isoform>
        <id>O94875-2</id>
        <name>2</name>
        <name>ArgBP2a</name>
        <sequence type="described" ref="VSP_034792 VSP_034794 VSP_034798"/>
    </isoform>
    <isoform>
        <id>O94875-3</id>
        <name>3</name>
        <sequence type="described" ref="VSP_034795 VSP_034798"/>
    </isoform>
    <isoform>
        <id>O94875-4</id>
        <name>4</name>
        <sequence type="described" ref="VSP_034792 VSP_034795 VSP_034798"/>
    </isoform>
    <isoform>
        <id>O94875-5</id>
        <name>5</name>
        <name>ArgBP2b</name>
        <sequence type="described" ref="VSP_034792 VSP_034795 VSP_034798 VSP_034799"/>
    </isoform>
    <isoform>
        <id>O94875-6</id>
        <name>6</name>
        <name>Sorbin</name>
        <sequence type="described" ref="VSP_034791 VSP_034793 VSP_034796 VSP_034797"/>
    </isoform>
    <isoform>
        <id>O94875-7</id>
        <name>7</name>
        <sequence type="described" ref="VSP_043665 VSP_043666"/>
    </isoform>
    <isoform>
        <id>O94875-8</id>
        <name>8</name>
        <sequence type="described" ref="VSP_045640 VSP_045641 VSP_034798"/>
    </isoform>
    <isoform>
        <id>O94875-9</id>
        <name>9</name>
        <sequence type="described" ref="VSP_046219 VSP_043666 VSP_034798"/>
    </isoform>
    <isoform>
        <id>O94875-10</id>
        <name>10</name>
        <sequence type="described" ref="VSP_046220 VSP_034795 VSP_034798"/>
    </isoform>
    <isoform>
        <id>O94875-11</id>
        <name>11</name>
        <sequence type="described" ref="VSP_047056"/>
    </isoform>
    <isoform>
        <id>O94875-12</id>
        <name>12</name>
        <sequence type="described" ref="VSP_046219 VSP_034795 VSP_034798"/>
    </isoform>
</comment>
<comment type="tissue specificity">
    <text evidence="7 11 12">Abundantly expressed in heart. In cardiac muscle cells, located in the Z-disks of sarcomere. Also found, but to a lower extent, in small and large intestine, pancreas, thymus, colon, spleen, prostate, testis, brain, ovary and epithelial cells. In the pancreas, mainly expressed in acinar cells, duct cells and all cell types in islets (at protein level). Tends to be down-regulated in pancreatic adenocarcinomas ans metastases.</text>
</comment>
<comment type="domain">
    <text evidence="11">The first 2 SH3 domains are required for WASF1-binding. All 3 SH3 domains can bind independently to PTPN12.</text>
</comment>
<comment type="PTM">
    <text evidence="8">Ubiquitinated by CBL.</text>
</comment>
<comment type="PTM">
    <text evidence="11">Dephosphorylated by PTPN12.</text>
</comment>
<comment type="caution">
    <text evidence="9 19">Was shown to interact with AKT1 and PAK1 (PubMed:15784622). This work has later been retracted due to concerns of image manipulation.</text>
</comment>
<comment type="sequence caution" evidence="18">
    <conflict type="erroneous initiation">
        <sequence resource="EMBL-CDS" id="BAA34497"/>
    </conflict>
</comment>
<comment type="online information" name="Atlas of Genetics and Cytogenetics in Oncology and Haematology">
    <link uri="https://atlasgeneticsoncology.org/gene/693/SORBS2"/>
</comment>
<dbReference type="EMBL" id="AF049884">
    <property type="protein sequence ID" value="AAC05508.1"/>
    <property type="molecule type" value="mRNA"/>
</dbReference>
<dbReference type="EMBL" id="AF049885">
    <property type="protein sequence ID" value="AAC05509.1"/>
    <property type="molecule type" value="mRNA"/>
</dbReference>
<dbReference type="EMBL" id="AB018320">
    <property type="protein sequence ID" value="BAA34497.2"/>
    <property type="status" value="ALT_INIT"/>
    <property type="molecule type" value="mRNA"/>
</dbReference>
<dbReference type="EMBL" id="AK056628">
    <property type="protein sequence ID" value="BAG51769.1"/>
    <property type="molecule type" value="mRNA"/>
</dbReference>
<dbReference type="EMBL" id="AK293400">
    <property type="protein sequence ID" value="BAH11501.1"/>
    <property type="molecule type" value="mRNA"/>
</dbReference>
<dbReference type="EMBL" id="AK296461">
    <property type="protein sequence ID" value="BAH12362.1"/>
    <property type="molecule type" value="mRNA"/>
</dbReference>
<dbReference type="EMBL" id="AK225327">
    <property type="status" value="NOT_ANNOTATED_CDS"/>
    <property type="molecule type" value="mRNA"/>
</dbReference>
<dbReference type="EMBL" id="AK225812">
    <property type="status" value="NOT_ANNOTATED_CDS"/>
    <property type="molecule type" value="mRNA"/>
</dbReference>
<dbReference type="EMBL" id="AC093797">
    <property type="status" value="NOT_ANNOTATED_CDS"/>
    <property type="molecule type" value="Genomic_DNA"/>
</dbReference>
<dbReference type="EMBL" id="AC096659">
    <property type="status" value="NOT_ANNOTATED_CDS"/>
    <property type="molecule type" value="Genomic_DNA"/>
</dbReference>
<dbReference type="EMBL" id="AC104805">
    <property type="status" value="NOT_ANNOTATED_CDS"/>
    <property type="molecule type" value="Genomic_DNA"/>
</dbReference>
<dbReference type="EMBL" id="AC108472">
    <property type="status" value="NOT_ANNOTATED_CDS"/>
    <property type="molecule type" value="Genomic_DNA"/>
</dbReference>
<dbReference type="EMBL" id="CH471056">
    <property type="protein sequence ID" value="EAX04630.1"/>
    <property type="molecule type" value="Genomic_DNA"/>
</dbReference>
<dbReference type="EMBL" id="CH471056">
    <property type="protein sequence ID" value="EAX04631.1"/>
    <property type="molecule type" value="Genomic_DNA"/>
</dbReference>
<dbReference type="EMBL" id="CH471056">
    <property type="protein sequence ID" value="EAX04632.1"/>
    <property type="molecule type" value="Genomic_DNA"/>
</dbReference>
<dbReference type="EMBL" id="CH471056">
    <property type="protein sequence ID" value="EAX04635.1"/>
    <property type="molecule type" value="Genomic_DNA"/>
</dbReference>
<dbReference type="EMBL" id="CH471056">
    <property type="protein sequence ID" value="EAX04636.1"/>
    <property type="molecule type" value="Genomic_DNA"/>
</dbReference>
<dbReference type="EMBL" id="BC011883">
    <property type="protein sequence ID" value="AAH11883.1"/>
    <property type="molecule type" value="mRNA"/>
</dbReference>
<dbReference type="CCDS" id="CCDS3845.1">
    <molecule id="O94875-1"/>
</dbReference>
<dbReference type="CCDS" id="CCDS43289.2">
    <molecule id="O94875-2"/>
</dbReference>
<dbReference type="CCDS" id="CCDS47173.1">
    <molecule id="O94875-9"/>
</dbReference>
<dbReference type="CCDS" id="CCDS47174.1">
    <molecule id="O94875-12"/>
</dbReference>
<dbReference type="CCDS" id="CCDS47175.1">
    <molecule id="O94875-10"/>
</dbReference>
<dbReference type="CCDS" id="CCDS47176.1">
    <molecule id="O94875-7"/>
</dbReference>
<dbReference type="CCDS" id="CCDS54825.1">
    <molecule id="O94875-8"/>
</dbReference>
<dbReference type="CCDS" id="CCDS59482.1">
    <molecule id="O94875-11"/>
</dbReference>
<dbReference type="RefSeq" id="NP_001139142.1">
    <molecule id="O94875-9"/>
    <property type="nucleotide sequence ID" value="NM_001145670.2"/>
</dbReference>
<dbReference type="RefSeq" id="NP_001139143.1">
    <molecule id="O94875-12"/>
    <property type="nucleotide sequence ID" value="NM_001145671.3"/>
</dbReference>
<dbReference type="RefSeq" id="NP_001139144.1">
    <molecule id="O94875-8"/>
    <property type="nucleotide sequence ID" value="NM_001145672.2"/>
</dbReference>
<dbReference type="RefSeq" id="NP_001139145.1">
    <molecule id="O94875-10"/>
    <property type="nucleotide sequence ID" value="NM_001145673.3"/>
</dbReference>
<dbReference type="RefSeq" id="NP_001139146.1">
    <molecule id="O94875-7"/>
    <property type="nucleotide sequence ID" value="NM_001145674.3"/>
</dbReference>
<dbReference type="RefSeq" id="NP_001257700.1">
    <molecule id="O94875-11"/>
    <property type="nucleotide sequence ID" value="NM_001270771.3"/>
</dbReference>
<dbReference type="RefSeq" id="NP_001381180.1">
    <molecule id="O94875-11"/>
    <property type="nucleotide sequence ID" value="NM_001394251.1"/>
</dbReference>
<dbReference type="RefSeq" id="NP_001381181.1">
    <molecule id="O94875-11"/>
    <property type="nucleotide sequence ID" value="NM_001394252.1"/>
</dbReference>
<dbReference type="RefSeq" id="NP_001381182.1">
    <molecule id="O94875-11"/>
    <property type="nucleotide sequence ID" value="NM_001394253.1"/>
</dbReference>
<dbReference type="RefSeq" id="NP_001381195.1">
    <molecule id="O94875-1"/>
    <property type="nucleotide sequence ID" value="NM_001394266.1"/>
</dbReference>
<dbReference type="RefSeq" id="NP_001381196.1">
    <molecule id="O94875-1"/>
    <property type="nucleotide sequence ID" value="NM_001394267.1"/>
</dbReference>
<dbReference type="RefSeq" id="NP_001381197.1">
    <molecule id="O94875-1"/>
    <property type="nucleotide sequence ID" value="NM_001394268.1"/>
</dbReference>
<dbReference type="RefSeq" id="NP_001381199.1">
    <molecule id="O94875-1"/>
    <property type="nucleotide sequence ID" value="NM_001394270.1"/>
</dbReference>
<dbReference type="RefSeq" id="NP_001381200.1">
    <molecule id="O94875-1"/>
    <property type="nucleotide sequence ID" value="NM_001394271.1"/>
</dbReference>
<dbReference type="RefSeq" id="NP_001381201.1">
    <molecule id="O94875-1"/>
    <property type="nucleotide sequence ID" value="NM_001394272.1"/>
</dbReference>
<dbReference type="RefSeq" id="NP_003594.3">
    <molecule id="O94875-2"/>
    <property type="nucleotide sequence ID" value="NM_003603.6"/>
</dbReference>
<dbReference type="RefSeq" id="NP_066547.1">
    <molecule id="O94875-1"/>
    <property type="nucleotide sequence ID" value="NM_021069.6"/>
</dbReference>
<dbReference type="RefSeq" id="XP_005263369.1">
    <property type="nucleotide sequence ID" value="XM_005263312.1"/>
</dbReference>
<dbReference type="RefSeq" id="XP_006714453.1">
    <property type="nucleotide sequence ID" value="XM_006714390.1"/>
</dbReference>
<dbReference type="RefSeq" id="XP_016864260.1">
    <property type="nucleotide sequence ID" value="XM_017008771.1"/>
</dbReference>
<dbReference type="PDB" id="5VEI">
    <property type="method" value="X-ray"/>
    <property type="resolution" value="1.33 A"/>
    <property type="chains" value="A=866-921"/>
</dbReference>
<dbReference type="PDBsum" id="5VEI"/>
<dbReference type="SMR" id="O94875"/>
<dbReference type="BioGRID" id="114047">
    <property type="interactions" value="89"/>
</dbReference>
<dbReference type="CORUM" id="O94875"/>
<dbReference type="DIP" id="DIP-31634N"/>
<dbReference type="FunCoup" id="O94875">
    <property type="interactions" value="536"/>
</dbReference>
<dbReference type="IntAct" id="O94875">
    <property type="interactions" value="68"/>
</dbReference>
<dbReference type="MINT" id="O94875"/>
<dbReference type="STRING" id="9606.ENSP00000347852"/>
<dbReference type="GlyCosmos" id="O94875">
    <property type="glycosylation" value="2 sites, 1 glycan"/>
</dbReference>
<dbReference type="GlyGen" id="O94875">
    <property type="glycosylation" value="3 sites, 2 N-linked glycans (1 site), 1 O-linked glycan (2 sites)"/>
</dbReference>
<dbReference type="iPTMnet" id="O94875"/>
<dbReference type="PhosphoSitePlus" id="O94875"/>
<dbReference type="SwissPalm" id="O94875"/>
<dbReference type="BioMuta" id="SORBS2"/>
<dbReference type="jPOST" id="O94875"/>
<dbReference type="MassIVE" id="O94875"/>
<dbReference type="PaxDb" id="9606-ENSP00000347852"/>
<dbReference type="PeptideAtlas" id="O94875"/>
<dbReference type="ProteomicsDB" id="10626"/>
<dbReference type="ProteomicsDB" id="19072"/>
<dbReference type="ProteomicsDB" id="19092"/>
<dbReference type="ProteomicsDB" id="33754"/>
<dbReference type="ProteomicsDB" id="43369"/>
<dbReference type="ProteomicsDB" id="50512">
    <molecule id="O94875-1"/>
</dbReference>
<dbReference type="ProteomicsDB" id="50513">
    <molecule id="O94875-2"/>
</dbReference>
<dbReference type="ProteomicsDB" id="50514">
    <molecule id="O94875-3"/>
</dbReference>
<dbReference type="ProteomicsDB" id="50515">
    <molecule id="O94875-4"/>
</dbReference>
<dbReference type="ProteomicsDB" id="50516">
    <molecule id="O94875-5"/>
</dbReference>
<dbReference type="ProteomicsDB" id="50517">
    <molecule id="O94875-6"/>
</dbReference>
<dbReference type="ProteomicsDB" id="50518">
    <molecule id="O94875-7"/>
</dbReference>
<dbReference type="Pumba" id="O94875"/>
<dbReference type="ABCD" id="O94875">
    <property type="antibodies" value="10 sequenced antibodies"/>
</dbReference>
<dbReference type="Antibodypedia" id="28990">
    <property type="antibodies" value="112 antibodies from 25 providers"/>
</dbReference>
<dbReference type="DNASU" id="8470"/>
<dbReference type="Ensembl" id="ENST00000284776.11">
    <molecule id="O94875-1"/>
    <property type="protein sequence ID" value="ENSP00000284776.7"/>
    <property type="gene ID" value="ENSG00000154556.20"/>
</dbReference>
<dbReference type="Ensembl" id="ENST00000319471.13">
    <molecule id="O94875-12"/>
    <property type="protein sequence ID" value="ENSP00000322182.9"/>
    <property type="gene ID" value="ENSG00000154556.20"/>
</dbReference>
<dbReference type="Ensembl" id="ENST00000355634.9">
    <molecule id="O94875-11"/>
    <property type="protein sequence ID" value="ENSP00000347852.5"/>
    <property type="gene ID" value="ENSG00000154556.20"/>
</dbReference>
<dbReference type="Ensembl" id="ENST00000393528.7">
    <molecule id="O94875-2"/>
    <property type="protein sequence ID" value="ENSP00000377162.3"/>
    <property type="gene ID" value="ENSG00000154556.20"/>
</dbReference>
<dbReference type="Ensembl" id="ENST00000437304.6">
    <molecule id="O94875-10"/>
    <property type="protein sequence ID" value="ENSP00000396008.2"/>
    <property type="gene ID" value="ENSG00000154556.20"/>
</dbReference>
<dbReference type="Ensembl" id="ENST00000449407.6">
    <molecule id="O94875-9"/>
    <property type="protein sequence ID" value="ENSP00000397262.2"/>
    <property type="gene ID" value="ENSG00000154556.20"/>
</dbReference>
<dbReference type="Ensembl" id="ENST00000451974.6">
    <molecule id="O94875-8"/>
    <property type="protein sequence ID" value="ENSP00000401818.2"/>
    <property type="gene ID" value="ENSG00000154556.20"/>
</dbReference>
<dbReference type="Ensembl" id="ENST00000487836.6">
    <molecule id="O94875-7"/>
    <property type="protein sequence ID" value="ENSP00000511887.1"/>
    <property type="gene ID" value="ENSG00000154556.20"/>
</dbReference>
<dbReference type="GeneID" id="8470"/>
<dbReference type="KEGG" id="hsa:8470"/>
<dbReference type="UCSC" id="uc003iyh.4">
    <molecule id="O94875-1"/>
    <property type="organism name" value="human"/>
</dbReference>
<dbReference type="AGR" id="HGNC:24098"/>
<dbReference type="CTD" id="8470"/>
<dbReference type="DisGeNET" id="8470"/>
<dbReference type="GeneCards" id="SORBS2"/>
<dbReference type="HGNC" id="HGNC:24098">
    <property type="gene designation" value="SORBS2"/>
</dbReference>
<dbReference type="HPA" id="ENSG00000154556">
    <property type="expression patterns" value="Tissue enhanced (heart)"/>
</dbReference>
<dbReference type="MIM" id="616349">
    <property type="type" value="gene"/>
</dbReference>
<dbReference type="neXtProt" id="NX_O94875"/>
<dbReference type="OpenTargets" id="ENSG00000154556"/>
<dbReference type="PharmGKB" id="PA142670890"/>
<dbReference type="VEuPathDB" id="HostDB:ENSG00000154556"/>
<dbReference type="eggNOG" id="KOG4225">
    <property type="taxonomic scope" value="Eukaryota"/>
</dbReference>
<dbReference type="GeneTree" id="ENSGT00940000157056"/>
<dbReference type="HOGENOM" id="CLU_003951_2_0_1"/>
<dbReference type="InParanoid" id="O94875"/>
<dbReference type="OMA" id="RYQHRHL"/>
<dbReference type="OrthoDB" id="73680at2759"/>
<dbReference type="PAN-GO" id="O94875">
    <property type="GO annotations" value="5 GO annotations based on evolutionary models"/>
</dbReference>
<dbReference type="PhylomeDB" id="O94875"/>
<dbReference type="TreeFam" id="TF320680"/>
<dbReference type="PathwayCommons" id="O94875"/>
<dbReference type="SignaLink" id="O94875"/>
<dbReference type="SIGNOR" id="O94875"/>
<dbReference type="BioGRID-ORCS" id="8470">
    <property type="hits" value="13 hits in 1152 CRISPR screens"/>
</dbReference>
<dbReference type="CD-CODE" id="4DFA2D97">
    <property type="entry name" value="ArgBP2 dendritic spine condensate"/>
</dbReference>
<dbReference type="CD-CODE" id="FB4E32DD">
    <property type="entry name" value="Presynaptic clusters and postsynaptic densities"/>
</dbReference>
<dbReference type="ChiTaRS" id="SORBS2">
    <property type="organism name" value="human"/>
</dbReference>
<dbReference type="GeneWiki" id="SORBS2"/>
<dbReference type="GenomeRNAi" id="8470"/>
<dbReference type="Pharos" id="O94875">
    <property type="development level" value="Tbio"/>
</dbReference>
<dbReference type="PRO" id="PR:O94875"/>
<dbReference type="Proteomes" id="UP000005640">
    <property type="component" value="Chromosome 4"/>
</dbReference>
<dbReference type="RNAct" id="O94875">
    <property type="molecule type" value="protein"/>
</dbReference>
<dbReference type="Bgee" id="ENSG00000154556">
    <property type="expression patterns" value="Expressed in heart right ventricle and 207 other cell types or tissues"/>
</dbReference>
<dbReference type="ExpressionAtlas" id="O94875">
    <property type="expression patterns" value="baseline and differential"/>
</dbReference>
<dbReference type="GO" id="GO:0015629">
    <property type="term" value="C:actin cytoskeleton"/>
    <property type="evidence" value="ECO:0000304"/>
    <property type="project" value="ProtInc"/>
</dbReference>
<dbReference type="GO" id="GO:0016324">
    <property type="term" value="C:apical plasma membrane"/>
    <property type="evidence" value="ECO:0007669"/>
    <property type="project" value="UniProtKB-SubCell"/>
</dbReference>
<dbReference type="GO" id="GO:0030425">
    <property type="term" value="C:dendrite"/>
    <property type="evidence" value="ECO:0000318"/>
    <property type="project" value="GO_Central"/>
</dbReference>
<dbReference type="GO" id="GO:0005925">
    <property type="term" value="C:focal adhesion"/>
    <property type="evidence" value="ECO:0007669"/>
    <property type="project" value="UniProtKB-SubCell"/>
</dbReference>
<dbReference type="GO" id="GO:0030027">
    <property type="term" value="C:lamellipodium"/>
    <property type="evidence" value="ECO:0007669"/>
    <property type="project" value="UniProtKB-SubCell"/>
</dbReference>
<dbReference type="GO" id="GO:0043025">
    <property type="term" value="C:neuronal cell body"/>
    <property type="evidence" value="ECO:0000318"/>
    <property type="project" value="GO_Central"/>
</dbReference>
<dbReference type="GO" id="GO:0005634">
    <property type="term" value="C:nucleus"/>
    <property type="evidence" value="ECO:0000304"/>
    <property type="project" value="ProtInc"/>
</dbReference>
<dbReference type="GO" id="GO:0048471">
    <property type="term" value="C:perinuclear region of cytoplasm"/>
    <property type="evidence" value="ECO:0007669"/>
    <property type="project" value="UniProtKB-SubCell"/>
</dbReference>
<dbReference type="GO" id="GO:0005886">
    <property type="term" value="C:plasma membrane"/>
    <property type="evidence" value="ECO:0000318"/>
    <property type="project" value="GO_Central"/>
</dbReference>
<dbReference type="GO" id="GO:0045202">
    <property type="term" value="C:synapse"/>
    <property type="evidence" value="ECO:0000318"/>
    <property type="project" value="GO_Central"/>
</dbReference>
<dbReference type="GO" id="GO:0030018">
    <property type="term" value="C:Z disc"/>
    <property type="evidence" value="ECO:0000303"/>
    <property type="project" value="UniProtKB"/>
</dbReference>
<dbReference type="GO" id="GO:0008093">
    <property type="term" value="F:cytoskeletal anchor activity"/>
    <property type="evidence" value="ECO:0000304"/>
    <property type="project" value="ProtInc"/>
</dbReference>
<dbReference type="GO" id="GO:0042802">
    <property type="term" value="F:identical protein binding"/>
    <property type="evidence" value="ECO:0000353"/>
    <property type="project" value="IntAct"/>
</dbReference>
<dbReference type="GO" id="GO:0003723">
    <property type="term" value="F:RNA binding"/>
    <property type="evidence" value="ECO:0007005"/>
    <property type="project" value="UniProtKB"/>
</dbReference>
<dbReference type="GO" id="GO:0005200">
    <property type="term" value="F:structural constituent of cytoskeleton"/>
    <property type="evidence" value="ECO:0000304"/>
    <property type="project" value="ProtInc"/>
</dbReference>
<dbReference type="GO" id="GO:0008307">
    <property type="term" value="F:structural constituent of muscle"/>
    <property type="evidence" value="ECO:0000304"/>
    <property type="project" value="ProtInc"/>
</dbReference>
<dbReference type="GO" id="GO:0061049">
    <property type="term" value="P:cell growth involved in cardiac muscle cell development"/>
    <property type="evidence" value="ECO:0000250"/>
    <property type="project" value="BHF-UCL"/>
</dbReference>
<dbReference type="GO" id="GO:0007219">
    <property type="term" value="P:Notch signaling pathway"/>
    <property type="evidence" value="ECO:0000318"/>
    <property type="project" value="GO_Central"/>
</dbReference>
<dbReference type="CDD" id="cd11920">
    <property type="entry name" value="SH3_Sorbs2_1"/>
    <property type="match status" value="1"/>
</dbReference>
<dbReference type="CDD" id="cd11923">
    <property type="entry name" value="SH3_Sorbs2_2"/>
    <property type="match status" value="1"/>
</dbReference>
<dbReference type="CDD" id="cd11917">
    <property type="entry name" value="SH3_Sorbs2_3"/>
    <property type="match status" value="1"/>
</dbReference>
<dbReference type="FunFam" id="2.30.30.40:FF:000001">
    <property type="entry name" value="Sorbin and SH3 domain-containing protein 1 isoform 2"/>
    <property type="match status" value="1"/>
</dbReference>
<dbReference type="FunFam" id="2.30.30.40:FF:000003">
    <property type="entry name" value="Sorbin and SH3 domain-containing protein 1 isoform 2"/>
    <property type="match status" value="1"/>
</dbReference>
<dbReference type="FunFam" id="2.30.30.40:FF:000004">
    <property type="entry name" value="Sorbin and SH3 domain-containing protein 1 isoform 2"/>
    <property type="match status" value="1"/>
</dbReference>
<dbReference type="Gene3D" id="2.30.30.40">
    <property type="entry name" value="SH3 Domains"/>
    <property type="match status" value="3"/>
</dbReference>
<dbReference type="InterPro" id="IPR050384">
    <property type="entry name" value="Endophilin_SH3RF"/>
</dbReference>
<dbReference type="InterPro" id="IPR036028">
    <property type="entry name" value="SH3-like_dom_sf"/>
</dbReference>
<dbReference type="InterPro" id="IPR001452">
    <property type="entry name" value="SH3_domain"/>
</dbReference>
<dbReference type="InterPro" id="IPR003127">
    <property type="entry name" value="SoHo_dom"/>
</dbReference>
<dbReference type="InterPro" id="IPR013087">
    <property type="entry name" value="Znf_C2H2_type"/>
</dbReference>
<dbReference type="PANTHER" id="PTHR14167">
    <property type="entry name" value="SH3 DOMAIN-CONTAINING"/>
    <property type="match status" value="1"/>
</dbReference>
<dbReference type="PANTHER" id="PTHR14167:SF56">
    <property type="entry name" value="SORBIN AND SH3 DOMAIN-CONTAINING PROTEIN 2"/>
    <property type="match status" value="1"/>
</dbReference>
<dbReference type="Pfam" id="PF00018">
    <property type="entry name" value="SH3_1"/>
    <property type="match status" value="2"/>
</dbReference>
<dbReference type="Pfam" id="PF14604">
    <property type="entry name" value="SH3_9"/>
    <property type="match status" value="1"/>
</dbReference>
<dbReference type="Pfam" id="PF02208">
    <property type="entry name" value="Sorb"/>
    <property type="match status" value="1"/>
</dbReference>
<dbReference type="PRINTS" id="PR00499">
    <property type="entry name" value="P67PHOX"/>
</dbReference>
<dbReference type="PRINTS" id="PR00452">
    <property type="entry name" value="SH3DOMAIN"/>
</dbReference>
<dbReference type="SMART" id="SM00326">
    <property type="entry name" value="SH3"/>
    <property type="match status" value="3"/>
</dbReference>
<dbReference type="SMART" id="SM00459">
    <property type="entry name" value="Sorb"/>
    <property type="match status" value="1"/>
</dbReference>
<dbReference type="SUPFAM" id="SSF50044">
    <property type="entry name" value="SH3-domain"/>
    <property type="match status" value="3"/>
</dbReference>
<dbReference type="PROSITE" id="PS50002">
    <property type="entry name" value="SH3"/>
    <property type="match status" value="3"/>
</dbReference>
<dbReference type="PROSITE" id="PS50831">
    <property type="entry name" value="SOHO"/>
    <property type="match status" value="1"/>
</dbReference>
<name>SRBS2_HUMAN</name>
<sequence length="1100" mass="124108">MSYYQRPFSPSAYSLPASLNSSIVMQHGTSLDSTDTYPQHAQSLDGTTSSSIPLYRSSEEEKRVTVIKAPHYPGIGPVDESGIPTAIRTTVDRPKDWYKTMFKQIHMVHKPDDDTDMYNTPYTYNAGLYNPPYSAQSHPAAKTQTYRPLSKSHSDNSPNAFKDASSPVPPPHVPPPVPPLRPRDRSSTEKHDWDPPDRKVDTRKFRSEPRSIFEYEPGKSSILQHERPASLYQSSIDRSLERPMSSASMASDFRKRRKSEPAVGPPRGLGDQSASRTSPGRVDLPGSSTTLTKSFTSSSPSSPSRAKGGDDSKICPSLCSYSGLNGNPSSELDYCSTYRQHLDVPRDSPRAISFKNGWQMARQNAEIWSSTEETVSPKIKSRSCDDLLNDDCDSFPDPKVKSESMGSLLCEEDSKESCPMAWGSPYVPEVRSNGRSRIRHRSARNAPGFLKMYKKMHRINRKDLMNSEVICSVKSRILQYESEQQHKDLLRAWSQCSTEEVPRDMVPTRISEFEKLIQKSKSMPNLGDDMLSPVTLEPPQNGLCPKRRFSIEYLLEEENQSGPPARGRRGCQSNALVPIHIEVTSDEQPRAHVEFSDSDQDGVVSDHSDYIHLEGSSFCSESDFDHFSFTSSESFYGSSHHHHHHHHHHHRHLISSCKGRCPASYTRFTTMLKHERARHENTEEPRRQEMDPGLSKLAFLVSPVPFRRKKNSAPKKQTEKAKCKASVFEALDSALKDICDQIKAEKKRGSLPDNSILHRLISELLPDVPERNSSLRALRRSPLHQPLHPLPPDGAIHCPPYQNDCGRMPRSASFQDVDTANSSCHHQDRGGALQDRESPRSYSSTLTDMGRSAPRERRGTPEKEKLPAKAVYDFKAQTSKELSFKKGDTVYILRKIDQNWYEGEHHGRVGIFPISYVEKLTPPEKAQPARPPPPAQPGEIGEAIAKYNFNADTNVELSLRKGDRVILLKRVDQNWYEGKIPGTNRQGIFPVSYVEVVKKNTKGAEDYPDPPIPHSYSSDRIHSLSSNKPQRPVFTHENIQGGGEPFQALYNYTPRNEDELELRESDVIDVMEKCDDGWFVGTSRRTKFFGTFPGNYVKRL</sequence>